<keyword id="KW-0067">ATP-binding</keyword>
<keyword id="KW-0418">Kinase</keyword>
<keyword id="KW-0441">Lipid A biosynthesis</keyword>
<keyword id="KW-0444">Lipid biosynthesis</keyword>
<keyword id="KW-0443">Lipid metabolism</keyword>
<keyword id="KW-0547">Nucleotide-binding</keyword>
<keyword id="KW-0808">Transferase</keyword>
<evidence type="ECO:0000255" key="1">
    <source>
        <dbReference type="HAMAP-Rule" id="MF_00409"/>
    </source>
</evidence>
<protein>
    <recommendedName>
        <fullName evidence="1">Tetraacyldisaccharide 4'-kinase</fullName>
        <ecNumber evidence="1">2.7.1.130</ecNumber>
    </recommendedName>
    <alternativeName>
        <fullName evidence="1">Lipid A 4'-kinase</fullName>
    </alternativeName>
</protein>
<sequence>MIERIWSGKSWLYLLLLPLSWLYGAITWLIRISYTLGLRSAWRAPVPVIIVGNLTAGGNGKTPVVIWLVEQLKQRGYRVGVVSRGYGGKSDVYPLLLSNSTTTSQAGDEPVLIYQRTAAPVAVSPKRSDAVKALLKSHDLDFIITDDGLQHYALQRDFELVVIDGVRRFGNGWWLPAGPMRERAGRLRSVDAVITNGGIAATGEIPMQLAAREAVNLVTGERCPAQQLQHVVAMAGIGHPPRFFATLNLLGIAPKKEYAFADHQDYSLAQLSSLTSGPQNLLMTEKDAVKCRVFAQPNWWYLPVDAQLPPDQAEQLLLKIQALSRCST</sequence>
<dbReference type="EC" id="2.7.1.130" evidence="1"/>
<dbReference type="EMBL" id="AM286415">
    <property type="protein sequence ID" value="CAL11623.1"/>
    <property type="molecule type" value="Genomic_DNA"/>
</dbReference>
<dbReference type="RefSeq" id="WP_005170991.1">
    <property type="nucleotide sequence ID" value="NC_008800.1"/>
</dbReference>
<dbReference type="RefSeq" id="YP_001005839.1">
    <property type="nucleotide sequence ID" value="NC_008800.1"/>
</dbReference>
<dbReference type="SMR" id="A1JMK0"/>
<dbReference type="KEGG" id="yen:YE1544"/>
<dbReference type="PATRIC" id="fig|393305.7.peg.1671"/>
<dbReference type="eggNOG" id="COG1663">
    <property type="taxonomic scope" value="Bacteria"/>
</dbReference>
<dbReference type="HOGENOM" id="CLU_038816_2_0_6"/>
<dbReference type="OrthoDB" id="9766423at2"/>
<dbReference type="UniPathway" id="UPA00359">
    <property type="reaction ID" value="UER00482"/>
</dbReference>
<dbReference type="Proteomes" id="UP000000642">
    <property type="component" value="Chromosome"/>
</dbReference>
<dbReference type="GO" id="GO:0005886">
    <property type="term" value="C:plasma membrane"/>
    <property type="evidence" value="ECO:0007669"/>
    <property type="project" value="TreeGrafter"/>
</dbReference>
<dbReference type="GO" id="GO:0005524">
    <property type="term" value="F:ATP binding"/>
    <property type="evidence" value="ECO:0007669"/>
    <property type="project" value="UniProtKB-UniRule"/>
</dbReference>
<dbReference type="GO" id="GO:0009029">
    <property type="term" value="F:tetraacyldisaccharide 4'-kinase activity"/>
    <property type="evidence" value="ECO:0007669"/>
    <property type="project" value="UniProtKB-UniRule"/>
</dbReference>
<dbReference type="GO" id="GO:0009245">
    <property type="term" value="P:lipid A biosynthetic process"/>
    <property type="evidence" value="ECO:0007669"/>
    <property type="project" value="UniProtKB-UniRule"/>
</dbReference>
<dbReference type="GO" id="GO:0009244">
    <property type="term" value="P:lipopolysaccharide core region biosynthetic process"/>
    <property type="evidence" value="ECO:0007669"/>
    <property type="project" value="TreeGrafter"/>
</dbReference>
<dbReference type="HAMAP" id="MF_00409">
    <property type="entry name" value="LpxK"/>
    <property type="match status" value="1"/>
</dbReference>
<dbReference type="InterPro" id="IPR003758">
    <property type="entry name" value="LpxK"/>
</dbReference>
<dbReference type="InterPro" id="IPR027417">
    <property type="entry name" value="P-loop_NTPase"/>
</dbReference>
<dbReference type="NCBIfam" id="TIGR00682">
    <property type="entry name" value="lpxK"/>
    <property type="match status" value="1"/>
</dbReference>
<dbReference type="PANTHER" id="PTHR42724">
    <property type="entry name" value="TETRAACYLDISACCHARIDE 4'-KINASE"/>
    <property type="match status" value="1"/>
</dbReference>
<dbReference type="PANTHER" id="PTHR42724:SF1">
    <property type="entry name" value="TETRAACYLDISACCHARIDE 4'-KINASE, MITOCHONDRIAL-RELATED"/>
    <property type="match status" value="1"/>
</dbReference>
<dbReference type="Pfam" id="PF02606">
    <property type="entry name" value="LpxK"/>
    <property type="match status" value="1"/>
</dbReference>
<dbReference type="SUPFAM" id="SSF52540">
    <property type="entry name" value="P-loop containing nucleoside triphosphate hydrolases"/>
    <property type="match status" value="1"/>
</dbReference>
<name>LPXK_YERE8</name>
<reference key="1">
    <citation type="journal article" date="2006" name="PLoS Genet.">
        <title>The complete genome sequence and comparative genome analysis of the high pathogenicity Yersinia enterocolitica strain 8081.</title>
        <authorList>
            <person name="Thomson N.R."/>
            <person name="Howard S."/>
            <person name="Wren B.W."/>
            <person name="Holden M.T.G."/>
            <person name="Crossman L."/>
            <person name="Challis G.L."/>
            <person name="Churcher C."/>
            <person name="Mungall K."/>
            <person name="Brooks K."/>
            <person name="Chillingworth T."/>
            <person name="Feltwell T."/>
            <person name="Abdellah Z."/>
            <person name="Hauser H."/>
            <person name="Jagels K."/>
            <person name="Maddison M."/>
            <person name="Moule S."/>
            <person name="Sanders M."/>
            <person name="Whitehead S."/>
            <person name="Quail M.A."/>
            <person name="Dougan G."/>
            <person name="Parkhill J."/>
            <person name="Prentice M.B."/>
        </authorList>
    </citation>
    <scope>NUCLEOTIDE SEQUENCE [LARGE SCALE GENOMIC DNA]</scope>
    <source>
        <strain>NCTC 13174 / 8081</strain>
    </source>
</reference>
<accession>A1JMK0</accession>
<comment type="function">
    <text evidence="1">Transfers the gamma-phosphate of ATP to the 4'-position of a tetraacyldisaccharide 1-phosphate intermediate (termed DS-1-P) to form tetraacyldisaccharide 1,4'-bis-phosphate (lipid IVA).</text>
</comment>
<comment type="catalytic activity">
    <reaction evidence="1">
        <text>a lipid A disaccharide + ATP = a lipid IVA + ADP + H(+)</text>
        <dbReference type="Rhea" id="RHEA:67840"/>
        <dbReference type="ChEBI" id="CHEBI:15378"/>
        <dbReference type="ChEBI" id="CHEBI:30616"/>
        <dbReference type="ChEBI" id="CHEBI:176343"/>
        <dbReference type="ChEBI" id="CHEBI:176425"/>
        <dbReference type="ChEBI" id="CHEBI:456216"/>
        <dbReference type="EC" id="2.7.1.130"/>
    </reaction>
</comment>
<comment type="pathway">
    <text evidence="1">Glycolipid biosynthesis; lipid IV(A) biosynthesis; lipid IV(A) from (3R)-3-hydroxytetradecanoyl-[acyl-carrier-protein] and UDP-N-acetyl-alpha-D-glucosamine: step 6/6.</text>
</comment>
<comment type="similarity">
    <text evidence="1">Belongs to the LpxK family.</text>
</comment>
<organism>
    <name type="scientific">Yersinia enterocolitica serotype O:8 / biotype 1B (strain NCTC 13174 / 8081)</name>
    <dbReference type="NCBI Taxonomy" id="393305"/>
    <lineage>
        <taxon>Bacteria</taxon>
        <taxon>Pseudomonadati</taxon>
        <taxon>Pseudomonadota</taxon>
        <taxon>Gammaproteobacteria</taxon>
        <taxon>Enterobacterales</taxon>
        <taxon>Yersiniaceae</taxon>
        <taxon>Yersinia</taxon>
    </lineage>
</organism>
<gene>
    <name evidence="1" type="primary">lpxK</name>
    <name type="ordered locus">YE1544</name>
</gene>
<proteinExistence type="inferred from homology"/>
<feature type="chain" id="PRO_0000291254" description="Tetraacyldisaccharide 4'-kinase">
    <location>
        <begin position="1"/>
        <end position="328"/>
    </location>
</feature>
<feature type="binding site" evidence="1">
    <location>
        <begin position="55"/>
        <end position="62"/>
    </location>
    <ligand>
        <name>ATP</name>
        <dbReference type="ChEBI" id="CHEBI:30616"/>
    </ligand>
</feature>